<organism>
    <name type="scientific">Bacillus licheniformis (strain ATCC 14580 / DSM 13 / JCM 2505 / CCUG 7422 / NBRC 12200 / NCIMB 9375 / NCTC 10341 / NRRL NRS-1264 / Gibson 46)</name>
    <dbReference type="NCBI Taxonomy" id="279010"/>
    <lineage>
        <taxon>Bacteria</taxon>
        <taxon>Bacillati</taxon>
        <taxon>Bacillota</taxon>
        <taxon>Bacilli</taxon>
        <taxon>Bacillales</taxon>
        <taxon>Bacillaceae</taxon>
        <taxon>Bacillus</taxon>
    </lineage>
</organism>
<sequence length="208" mass="22982">MAILKAEERTDSRRSSLRRIRQSGYVPGVIYGRNLENKSVALDSIELLKILRAEGKNTIINLDINGDQHSVMVTELQTDPLKDSIVHADFKVVDMEAEMEATVPVNLTGEAEGIKQGGVLQQPLYELSVTAKPKNIPQTIEVDISSLEVNDVLTVGDIPTKGDYSYNHEPDEVVASILPPQKQEETEAESAAQDVEEPEKGTEEEKEE</sequence>
<proteinExistence type="inferred from homology"/>
<dbReference type="EMBL" id="AE017333">
    <property type="protein sequence ID" value="AAU39045.1"/>
    <property type="molecule type" value="Genomic_DNA"/>
</dbReference>
<dbReference type="EMBL" id="CP000002">
    <property type="protein sequence ID" value="AAU21700.1"/>
    <property type="molecule type" value="Genomic_DNA"/>
</dbReference>
<dbReference type="RefSeq" id="WP_003178205.1">
    <property type="nucleotide sequence ID" value="NC_006322.1"/>
</dbReference>
<dbReference type="SMR" id="Q65PG9"/>
<dbReference type="STRING" id="279010.BL00518"/>
<dbReference type="KEGG" id="bld:BLi00065"/>
<dbReference type="KEGG" id="bli:BL00518"/>
<dbReference type="eggNOG" id="COG1825">
    <property type="taxonomic scope" value="Bacteria"/>
</dbReference>
<dbReference type="HOGENOM" id="CLU_075939_2_0_9"/>
<dbReference type="Proteomes" id="UP000000606">
    <property type="component" value="Chromosome"/>
</dbReference>
<dbReference type="GO" id="GO:0022625">
    <property type="term" value="C:cytosolic large ribosomal subunit"/>
    <property type="evidence" value="ECO:0007669"/>
    <property type="project" value="TreeGrafter"/>
</dbReference>
<dbReference type="GO" id="GO:0008097">
    <property type="term" value="F:5S rRNA binding"/>
    <property type="evidence" value="ECO:0007669"/>
    <property type="project" value="InterPro"/>
</dbReference>
<dbReference type="GO" id="GO:0003735">
    <property type="term" value="F:structural constituent of ribosome"/>
    <property type="evidence" value="ECO:0007669"/>
    <property type="project" value="InterPro"/>
</dbReference>
<dbReference type="GO" id="GO:0006412">
    <property type="term" value="P:translation"/>
    <property type="evidence" value="ECO:0007669"/>
    <property type="project" value="UniProtKB-UniRule"/>
</dbReference>
<dbReference type="CDD" id="cd00495">
    <property type="entry name" value="Ribosomal_L25_TL5_CTC"/>
    <property type="match status" value="1"/>
</dbReference>
<dbReference type="Gene3D" id="2.170.120.20">
    <property type="entry name" value="Ribosomal protein L25, beta domain"/>
    <property type="match status" value="1"/>
</dbReference>
<dbReference type="Gene3D" id="2.40.240.10">
    <property type="entry name" value="Ribosomal Protein L25, Chain P"/>
    <property type="match status" value="1"/>
</dbReference>
<dbReference type="HAMAP" id="MF_01334">
    <property type="entry name" value="Ribosomal_bL25_CTC"/>
    <property type="match status" value="1"/>
</dbReference>
<dbReference type="InterPro" id="IPR020056">
    <property type="entry name" value="Rbsml_bL25/Gln-tRNA_synth_N"/>
</dbReference>
<dbReference type="InterPro" id="IPR011035">
    <property type="entry name" value="Ribosomal_bL25/Gln-tRNA_synth"/>
</dbReference>
<dbReference type="InterPro" id="IPR020057">
    <property type="entry name" value="Ribosomal_bL25_b-dom"/>
</dbReference>
<dbReference type="InterPro" id="IPR037121">
    <property type="entry name" value="Ribosomal_bL25_C"/>
</dbReference>
<dbReference type="InterPro" id="IPR001021">
    <property type="entry name" value="Ribosomal_bL25_long"/>
</dbReference>
<dbReference type="InterPro" id="IPR029751">
    <property type="entry name" value="Ribosomal_L25_dom"/>
</dbReference>
<dbReference type="InterPro" id="IPR020930">
    <property type="entry name" value="Ribosomal_uL5_bac-type"/>
</dbReference>
<dbReference type="NCBIfam" id="TIGR00731">
    <property type="entry name" value="bL25_bact_ctc"/>
    <property type="match status" value="1"/>
</dbReference>
<dbReference type="NCBIfam" id="NF004133">
    <property type="entry name" value="PRK05618.2-4"/>
    <property type="match status" value="1"/>
</dbReference>
<dbReference type="PANTHER" id="PTHR33284">
    <property type="entry name" value="RIBOSOMAL PROTEIN L25/GLN-TRNA SYNTHETASE, ANTI-CODON-BINDING DOMAIN-CONTAINING PROTEIN"/>
    <property type="match status" value="1"/>
</dbReference>
<dbReference type="PANTHER" id="PTHR33284:SF1">
    <property type="entry name" value="RIBOSOMAL PROTEIN L25_GLN-TRNA SYNTHETASE, ANTI-CODON-BINDING DOMAIN-CONTAINING PROTEIN"/>
    <property type="match status" value="1"/>
</dbReference>
<dbReference type="Pfam" id="PF01386">
    <property type="entry name" value="Ribosomal_L25p"/>
    <property type="match status" value="1"/>
</dbReference>
<dbReference type="Pfam" id="PF14693">
    <property type="entry name" value="Ribosomal_TL5_C"/>
    <property type="match status" value="1"/>
</dbReference>
<dbReference type="SUPFAM" id="SSF50715">
    <property type="entry name" value="Ribosomal protein L25-like"/>
    <property type="match status" value="1"/>
</dbReference>
<feature type="chain" id="PRO_0000181510" description="Large ribosomal subunit protein bL25">
    <location>
        <begin position="1"/>
        <end position="208"/>
    </location>
</feature>
<feature type="region of interest" description="Disordered" evidence="2">
    <location>
        <begin position="163"/>
        <end position="208"/>
    </location>
</feature>
<feature type="compositionally biased region" description="Basic and acidic residues" evidence="2">
    <location>
        <begin position="198"/>
        <end position="208"/>
    </location>
</feature>
<reference key="1">
    <citation type="journal article" date="2004" name="J. Mol. Microbiol. Biotechnol.">
        <title>The complete genome sequence of Bacillus licheniformis DSM13, an organism with great industrial potential.</title>
        <authorList>
            <person name="Veith B."/>
            <person name="Herzberg C."/>
            <person name="Steckel S."/>
            <person name="Feesche J."/>
            <person name="Maurer K.H."/>
            <person name="Ehrenreich P."/>
            <person name="Baeumer S."/>
            <person name="Henne A."/>
            <person name="Liesegang H."/>
            <person name="Merkl R."/>
            <person name="Ehrenreich A."/>
            <person name="Gottschalk G."/>
        </authorList>
    </citation>
    <scope>NUCLEOTIDE SEQUENCE [LARGE SCALE GENOMIC DNA]</scope>
    <source>
        <strain>ATCC 14580 / DSM 13 / JCM 2505 / CCUG 7422 / NBRC 12200 / NCIMB 9375 / NCTC 10341 / NRRL NRS-1264 / Gibson 46</strain>
    </source>
</reference>
<reference key="2">
    <citation type="journal article" date="2004" name="Genome Biol.">
        <title>Complete genome sequence of the industrial bacterium Bacillus licheniformis and comparisons with closely related Bacillus species.</title>
        <authorList>
            <person name="Rey M.W."/>
            <person name="Ramaiya P."/>
            <person name="Nelson B.A."/>
            <person name="Brody-Karpin S.D."/>
            <person name="Zaretsky E.J."/>
            <person name="Tang M."/>
            <person name="Lopez de Leon A."/>
            <person name="Xiang H."/>
            <person name="Gusti V."/>
            <person name="Clausen I.G."/>
            <person name="Olsen P.B."/>
            <person name="Rasmussen M.D."/>
            <person name="Andersen J.T."/>
            <person name="Joergensen P.L."/>
            <person name="Larsen T.S."/>
            <person name="Sorokin A."/>
            <person name="Bolotin A."/>
            <person name="Lapidus A."/>
            <person name="Galleron N."/>
            <person name="Ehrlich S.D."/>
            <person name="Berka R.M."/>
        </authorList>
    </citation>
    <scope>NUCLEOTIDE SEQUENCE [LARGE SCALE GENOMIC DNA]</scope>
    <source>
        <strain>ATCC 14580 / DSM 13 / JCM 2505 / CCUG 7422 / NBRC 12200 / NCIMB 9375 / NCTC 10341 / NRRL NRS-1264 / Gibson 46</strain>
    </source>
</reference>
<accession>Q65PG9</accession>
<accession>Q62ZV8</accession>
<protein>
    <recommendedName>
        <fullName evidence="1">Large ribosomal subunit protein bL25</fullName>
    </recommendedName>
    <alternativeName>
        <fullName evidence="3">50S ribosomal protein L25</fullName>
    </alternativeName>
    <alternativeName>
        <fullName evidence="1">General stress protein CTC</fullName>
    </alternativeName>
</protein>
<comment type="function">
    <text evidence="1">This is one of the proteins that binds to the 5S RNA in the ribosome where it forms part of the central protuberance.</text>
</comment>
<comment type="subunit">
    <text evidence="1">Part of the 50S ribosomal subunit; part of the 5S rRNA/L5/L18/L25 subcomplex. Contacts the 5S rRNA. Binds to the 5S rRNA independently of L5 and L18.</text>
</comment>
<comment type="similarity">
    <text evidence="1">Belongs to the bacterial ribosomal protein bL25 family. CTC subfamily.</text>
</comment>
<gene>
    <name evidence="1" type="primary">rplY</name>
    <name evidence="1" type="synonym">ctc</name>
    <name type="ordered locus">BLi00065</name>
    <name type="ordered locus">BL00518</name>
</gene>
<name>RL25_BACLD</name>
<keyword id="KW-1185">Reference proteome</keyword>
<keyword id="KW-0687">Ribonucleoprotein</keyword>
<keyword id="KW-0689">Ribosomal protein</keyword>
<keyword id="KW-0694">RNA-binding</keyword>
<keyword id="KW-0699">rRNA-binding</keyword>
<evidence type="ECO:0000255" key="1">
    <source>
        <dbReference type="HAMAP-Rule" id="MF_01334"/>
    </source>
</evidence>
<evidence type="ECO:0000256" key="2">
    <source>
        <dbReference type="SAM" id="MobiDB-lite"/>
    </source>
</evidence>
<evidence type="ECO:0000305" key="3"/>